<proteinExistence type="inferred from homology"/>
<keyword id="KW-0489">Methyltransferase</keyword>
<keyword id="KW-0949">S-adenosyl-L-methionine</keyword>
<keyword id="KW-0808">Transferase</keyword>
<keyword id="KW-0819">tRNA processing</keyword>
<comment type="function">
    <text evidence="2">Catalyzes the formation of N(7)-methylguanine at position 46 (m7G46) in tRNA.</text>
</comment>
<comment type="catalytic activity">
    <reaction evidence="2">
        <text>guanosine(46) in tRNA + S-adenosyl-L-methionine = N(7)-methylguanosine(46) in tRNA + S-adenosyl-L-homocysteine</text>
        <dbReference type="Rhea" id="RHEA:42708"/>
        <dbReference type="Rhea" id="RHEA-COMP:10188"/>
        <dbReference type="Rhea" id="RHEA-COMP:10189"/>
        <dbReference type="ChEBI" id="CHEBI:57856"/>
        <dbReference type="ChEBI" id="CHEBI:59789"/>
        <dbReference type="ChEBI" id="CHEBI:74269"/>
        <dbReference type="ChEBI" id="CHEBI:74480"/>
        <dbReference type="EC" id="2.1.1.33"/>
    </reaction>
</comment>
<comment type="pathway">
    <text evidence="2">tRNA modification; N(7)-methylguanine-tRNA biosynthesis.</text>
</comment>
<comment type="similarity">
    <text evidence="2">Belongs to the class I-like SAM-binding methyltransferase superfamily. TrmB family.</text>
</comment>
<feature type="chain" id="PRO_1000149661" description="tRNA (guanine-N(7)-)-methyltransferase">
    <location>
        <begin position="1"/>
        <end position="237"/>
    </location>
</feature>
<feature type="active site" evidence="1">
    <location>
        <position position="143"/>
    </location>
</feature>
<feature type="binding site" evidence="2">
    <location>
        <position position="68"/>
    </location>
    <ligand>
        <name>S-adenosyl-L-methionine</name>
        <dbReference type="ChEBI" id="CHEBI:59789"/>
    </ligand>
</feature>
<feature type="binding site" evidence="2">
    <location>
        <position position="93"/>
    </location>
    <ligand>
        <name>S-adenosyl-L-methionine</name>
        <dbReference type="ChEBI" id="CHEBI:59789"/>
    </ligand>
</feature>
<feature type="binding site" evidence="2">
    <location>
        <position position="120"/>
    </location>
    <ligand>
        <name>S-adenosyl-L-methionine</name>
        <dbReference type="ChEBI" id="CHEBI:59789"/>
    </ligand>
</feature>
<feature type="binding site" evidence="2">
    <location>
        <position position="143"/>
    </location>
    <ligand>
        <name>S-adenosyl-L-methionine</name>
        <dbReference type="ChEBI" id="CHEBI:59789"/>
    </ligand>
</feature>
<feature type="binding site" evidence="2">
    <location>
        <position position="147"/>
    </location>
    <ligand>
        <name>substrate</name>
    </ligand>
</feature>
<feature type="binding site" evidence="2">
    <location>
        <position position="179"/>
    </location>
    <ligand>
        <name>substrate</name>
    </ligand>
</feature>
<feature type="binding site" evidence="2">
    <location>
        <begin position="216"/>
        <end position="219"/>
    </location>
    <ligand>
        <name>substrate</name>
    </ligand>
</feature>
<dbReference type="EC" id="2.1.1.33" evidence="2"/>
<dbReference type="EMBL" id="CP000472">
    <property type="protein sequence ID" value="ACJ30372.1"/>
    <property type="molecule type" value="Genomic_DNA"/>
</dbReference>
<dbReference type="RefSeq" id="WP_020913717.1">
    <property type="nucleotide sequence ID" value="NC_011566.1"/>
</dbReference>
<dbReference type="SMR" id="B8CS82"/>
<dbReference type="STRING" id="225849.swp_3686"/>
<dbReference type="KEGG" id="swp:swp_3686"/>
<dbReference type="eggNOG" id="COG0220">
    <property type="taxonomic scope" value="Bacteria"/>
</dbReference>
<dbReference type="HOGENOM" id="CLU_050910_0_1_6"/>
<dbReference type="OrthoDB" id="9802090at2"/>
<dbReference type="UniPathway" id="UPA00989"/>
<dbReference type="Proteomes" id="UP000000753">
    <property type="component" value="Chromosome"/>
</dbReference>
<dbReference type="GO" id="GO:0043527">
    <property type="term" value="C:tRNA methyltransferase complex"/>
    <property type="evidence" value="ECO:0007669"/>
    <property type="project" value="TreeGrafter"/>
</dbReference>
<dbReference type="GO" id="GO:0008176">
    <property type="term" value="F:tRNA (guanine(46)-N7)-methyltransferase activity"/>
    <property type="evidence" value="ECO:0007669"/>
    <property type="project" value="UniProtKB-UniRule"/>
</dbReference>
<dbReference type="CDD" id="cd02440">
    <property type="entry name" value="AdoMet_MTases"/>
    <property type="match status" value="1"/>
</dbReference>
<dbReference type="FunFam" id="3.40.50.150:FF:000024">
    <property type="entry name" value="tRNA (guanine-N(7)-)-methyltransferase"/>
    <property type="match status" value="1"/>
</dbReference>
<dbReference type="Gene3D" id="3.40.50.150">
    <property type="entry name" value="Vaccinia Virus protein VP39"/>
    <property type="match status" value="1"/>
</dbReference>
<dbReference type="HAMAP" id="MF_01057">
    <property type="entry name" value="tRNA_methyltr_TrmB"/>
    <property type="match status" value="1"/>
</dbReference>
<dbReference type="InterPro" id="IPR029063">
    <property type="entry name" value="SAM-dependent_MTases_sf"/>
</dbReference>
<dbReference type="InterPro" id="IPR003358">
    <property type="entry name" value="tRNA_(Gua-N-7)_MeTrfase_Trmb"/>
</dbReference>
<dbReference type="InterPro" id="IPR055361">
    <property type="entry name" value="tRNA_methyltr_TrmB_bact"/>
</dbReference>
<dbReference type="NCBIfam" id="TIGR00091">
    <property type="entry name" value="tRNA (guanosine(46)-N7)-methyltransferase TrmB"/>
    <property type="match status" value="1"/>
</dbReference>
<dbReference type="PANTHER" id="PTHR23417">
    <property type="entry name" value="3-DEOXY-D-MANNO-OCTULOSONIC-ACID TRANSFERASE/TRNA GUANINE-N 7 - -METHYLTRANSFERASE"/>
    <property type="match status" value="1"/>
</dbReference>
<dbReference type="PANTHER" id="PTHR23417:SF14">
    <property type="entry name" value="PENTACOTRIPEPTIDE-REPEAT REGION OF PRORP DOMAIN-CONTAINING PROTEIN"/>
    <property type="match status" value="1"/>
</dbReference>
<dbReference type="Pfam" id="PF02390">
    <property type="entry name" value="Methyltransf_4"/>
    <property type="match status" value="1"/>
</dbReference>
<dbReference type="SUPFAM" id="SSF53335">
    <property type="entry name" value="S-adenosyl-L-methionine-dependent methyltransferases"/>
    <property type="match status" value="1"/>
</dbReference>
<dbReference type="PROSITE" id="PS51625">
    <property type="entry name" value="SAM_MT_TRMB"/>
    <property type="match status" value="1"/>
</dbReference>
<sequence length="237" mass="26592">MSDVTTAEFNEEGKYLRKVRSFVLREGRLTKGQAQAMEQQWPSMGLDYTPEAIDLVEVFGREADTVLEIGFGMGGSLVEMAKASPELNFIGIEVHKPGVGACLSVAAEAGVTNLRVYHHDALEVLENSIAEGSLARVQLFFPDPWHKKRHHKRRIVQAPFAELIRSKLKVGGVFHLATDWENYSEHMLEVMTAAPGYKNQSATGDVVERPEHRPLTKFEARGHRLGHGVWDLMFERV</sequence>
<name>TRMB_SHEPW</name>
<evidence type="ECO:0000250" key="1"/>
<evidence type="ECO:0000255" key="2">
    <source>
        <dbReference type="HAMAP-Rule" id="MF_01057"/>
    </source>
</evidence>
<accession>B8CS82</accession>
<reference key="1">
    <citation type="journal article" date="2008" name="PLoS ONE">
        <title>Environmental adaptation: genomic analysis of the piezotolerant and psychrotolerant deep-sea iron reducing bacterium Shewanella piezotolerans WP3.</title>
        <authorList>
            <person name="Wang F."/>
            <person name="Wang J."/>
            <person name="Jian H."/>
            <person name="Zhang B."/>
            <person name="Li S."/>
            <person name="Wang F."/>
            <person name="Zeng X."/>
            <person name="Gao L."/>
            <person name="Bartlett D.H."/>
            <person name="Yu J."/>
            <person name="Hu S."/>
            <person name="Xiao X."/>
        </authorList>
    </citation>
    <scope>NUCLEOTIDE SEQUENCE [LARGE SCALE GENOMIC DNA]</scope>
    <source>
        <strain>WP3 / JCM 13877</strain>
    </source>
</reference>
<gene>
    <name evidence="2" type="primary">trmB</name>
    <name type="ordered locus">swp_3686</name>
</gene>
<organism>
    <name type="scientific">Shewanella piezotolerans (strain WP3 / JCM 13877)</name>
    <dbReference type="NCBI Taxonomy" id="225849"/>
    <lineage>
        <taxon>Bacteria</taxon>
        <taxon>Pseudomonadati</taxon>
        <taxon>Pseudomonadota</taxon>
        <taxon>Gammaproteobacteria</taxon>
        <taxon>Alteromonadales</taxon>
        <taxon>Shewanellaceae</taxon>
        <taxon>Shewanella</taxon>
    </lineage>
</organism>
<protein>
    <recommendedName>
        <fullName evidence="2">tRNA (guanine-N(7)-)-methyltransferase</fullName>
        <ecNumber evidence="2">2.1.1.33</ecNumber>
    </recommendedName>
    <alternativeName>
        <fullName evidence="2">tRNA (guanine(46)-N(7))-methyltransferase</fullName>
    </alternativeName>
    <alternativeName>
        <fullName evidence="2">tRNA(m7G46)-methyltransferase</fullName>
    </alternativeName>
</protein>